<reference key="1">
    <citation type="journal article" date="2006" name="PLoS Genet.">
        <title>Comparative genomics of emerging human ehrlichiosis agents.</title>
        <authorList>
            <person name="Dunning Hotopp J.C."/>
            <person name="Lin M."/>
            <person name="Madupu R."/>
            <person name="Crabtree J."/>
            <person name="Angiuoli S.V."/>
            <person name="Eisen J.A."/>
            <person name="Seshadri R."/>
            <person name="Ren Q."/>
            <person name="Wu M."/>
            <person name="Utterback T.R."/>
            <person name="Smith S."/>
            <person name="Lewis M."/>
            <person name="Khouri H."/>
            <person name="Zhang C."/>
            <person name="Niu H."/>
            <person name="Lin Q."/>
            <person name="Ohashi N."/>
            <person name="Zhi N."/>
            <person name="Nelson W.C."/>
            <person name="Brinkac L.M."/>
            <person name="Dodson R.J."/>
            <person name="Rosovitz M.J."/>
            <person name="Sundaram J.P."/>
            <person name="Daugherty S.C."/>
            <person name="Davidsen T."/>
            <person name="Durkin A.S."/>
            <person name="Gwinn M.L."/>
            <person name="Haft D.H."/>
            <person name="Selengut J.D."/>
            <person name="Sullivan S.A."/>
            <person name="Zafar N."/>
            <person name="Zhou L."/>
            <person name="Benahmed F."/>
            <person name="Forberger H."/>
            <person name="Halpin R."/>
            <person name="Mulligan S."/>
            <person name="Robinson J."/>
            <person name="White O."/>
            <person name="Rikihisa Y."/>
            <person name="Tettelin H."/>
        </authorList>
    </citation>
    <scope>NUCLEOTIDE SEQUENCE [LARGE SCALE GENOMIC DNA]</scope>
    <source>
        <strain>HZ</strain>
    </source>
</reference>
<name>EX7L_ANAPZ</name>
<comment type="function">
    <text evidence="1">Bidirectionally degrades single-stranded DNA into large acid-insoluble oligonucleotides, which are then degraded further into small acid-soluble oligonucleotides.</text>
</comment>
<comment type="catalytic activity">
    <reaction evidence="1">
        <text>Exonucleolytic cleavage in either 5'- to 3'- or 3'- to 5'-direction to yield nucleoside 5'-phosphates.</text>
        <dbReference type="EC" id="3.1.11.6"/>
    </reaction>
</comment>
<comment type="subunit">
    <text evidence="1">Heterooligomer composed of large and small subunits.</text>
</comment>
<comment type="subcellular location">
    <subcellularLocation>
        <location evidence="1">Cytoplasm</location>
    </subcellularLocation>
</comment>
<comment type="similarity">
    <text evidence="1">Belongs to the XseA family.</text>
</comment>
<organism>
    <name type="scientific">Anaplasma phagocytophilum (strain HZ)</name>
    <dbReference type="NCBI Taxonomy" id="212042"/>
    <lineage>
        <taxon>Bacteria</taxon>
        <taxon>Pseudomonadati</taxon>
        <taxon>Pseudomonadota</taxon>
        <taxon>Alphaproteobacteria</taxon>
        <taxon>Rickettsiales</taxon>
        <taxon>Anaplasmataceae</taxon>
        <taxon>Anaplasma</taxon>
        <taxon>phagocytophilum group</taxon>
    </lineage>
</organism>
<evidence type="ECO:0000255" key="1">
    <source>
        <dbReference type="HAMAP-Rule" id="MF_00378"/>
    </source>
</evidence>
<feature type="chain" id="PRO_0000303773" description="Exodeoxyribonuclease 7 large subunit">
    <location>
        <begin position="1"/>
        <end position="398"/>
    </location>
</feature>
<protein>
    <recommendedName>
        <fullName evidence="1">Exodeoxyribonuclease 7 large subunit</fullName>
        <ecNumber evidence="1">3.1.11.6</ecNumber>
    </recommendedName>
    <alternativeName>
        <fullName evidence="1">Exodeoxyribonuclease VII large subunit</fullName>
        <shortName evidence="1">Exonuclease VII large subunit</shortName>
    </alternativeName>
</protein>
<accession>Q2GIH0</accession>
<sequence length="398" mass="44770">MQVTLLRSFSNDIPEFTVTEITGVLQRFMQETFYSIKVRGEISGLSRPNSGHVYFTLKDSNSVINAVCWNGTRLKVQFCDGLEVVCTGYLSVYQSKYQLIVTDMTLAGYGKLAAMLAELKKKLELEGLFSPARKKKLPFLPTKIGVITSPTGAVISDIISRVKQRFPSNVVVWPVQVQGDRASAMVIEAIKGFNSFADPPHVIIVARGGGSFEDLWPFNDEELARTVAASKIPIVSAIGHETDFTIIDYAADLRASTPTAAVELVLPEKSKLVASINEKFVRTKISFERIVKMQEYRLLRLHGILTEKKNSLLQKSRVALEYQQKIRYLLQVSLLRKRQYLESLMQRLSYYDSKHILSVGYAIVRDEHEKQISSVEALSTNDTITIELKDGKRRAIII</sequence>
<gene>
    <name evidence="1" type="primary">xseA</name>
    <name type="ordered locus">APH_1322</name>
</gene>
<dbReference type="EC" id="3.1.11.6" evidence="1"/>
<dbReference type="EMBL" id="CP000235">
    <property type="protein sequence ID" value="ABD43729.1"/>
    <property type="molecule type" value="Genomic_DNA"/>
</dbReference>
<dbReference type="SMR" id="Q2GIH0"/>
<dbReference type="STRING" id="212042.APH_1322"/>
<dbReference type="PaxDb" id="212042-APH_1322"/>
<dbReference type="EnsemblBacteria" id="ABD43729">
    <property type="protein sequence ID" value="ABD43729"/>
    <property type="gene ID" value="APH_1322"/>
</dbReference>
<dbReference type="KEGG" id="aph:APH_1322"/>
<dbReference type="eggNOG" id="COG1570">
    <property type="taxonomic scope" value="Bacteria"/>
</dbReference>
<dbReference type="HOGENOM" id="CLU_023625_2_0_5"/>
<dbReference type="Proteomes" id="UP000001943">
    <property type="component" value="Chromosome"/>
</dbReference>
<dbReference type="GO" id="GO:0005737">
    <property type="term" value="C:cytoplasm"/>
    <property type="evidence" value="ECO:0007669"/>
    <property type="project" value="UniProtKB-SubCell"/>
</dbReference>
<dbReference type="GO" id="GO:0009318">
    <property type="term" value="C:exodeoxyribonuclease VII complex"/>
    <property type="evidence" value="ECO:0007669"/>
    <property type="project" value="InterPro"/>
</dbReference>
<dbReference type="GO" id="GO:0008855">
    <property type="term" value="F:exodeoxyribonuclease VII activity"/>
    <property type="evidence" value="ECO:0007669"/>
    <property type="project" value="UniProtKB-UniRule"/>
</dbReference>
<dbReference type="GO" id="GO:0003676">
    <property type="term" value="F:nucleic acid binding"/>
    <property type="evidence" value="ECO:0007669"/>
    <property type="project" value="InterPro"/>
</dbReference>
<dbReference type="GO" id="GO:0006308">
    <property type="term" value="P:DNA catabolic process"/>
    <property type="evidence" value="ECO:0007669"/>
    <property type="project" value="UniProtKB-UniRule"/>
</dbReference>
<dbReference type="CDD" id="cd04489">
    <property type="entry name" value="ExoVII_LU_OBF"/>
    <property type="match status" value="1"/>
</dbReference>
<dbReference type="HAMAP" id="MF_00378">
    <property type="entry name" value="Exonuc_7_L"/>
    <property type="match status" value="1"/>
</dbReference>
<dbReference type="InterPro" id="IPR003753">
    <property type="entry name" value="Exonuc_VII_L"/>
</dbReference>
<dbReference type="InterPro" id="IPR020579">
    <property type="entry name" value="Exonuc_VII_lsu_C"/>
</dbReference>
<dbReference type="InterPro" id="IPR025824">
    <property type="entry name" value="OB-fold_nuc-bd_dom"/>
</dbReference>
<dbReference type="NCBIfam" id="TIGR00237">
    <property type="entry name" value="xseA"/>
    <property type="match status" value="1"/>
</dbReference>
<dbReference type="PANTHER" id="PTHR30008">
    <property type="entry name" value="EXODEOXYRIBONUCLEASE 7 LARGE SUBUNIT"/>
    <property type="match status" value="1"/>
</dbReference>
<dbReference type="PANTHER" id="PTHR30008:SF0">
    <property type="entry name" value="EXODEOXYRIBONUCLEASE 7 LARGE SUBUNIT"/>
    <property type="match status" value="1"/>
</dbReference>
<dbReference type="Pfam" id="PF02601">
    <property type="entry name" value="Exonuc_VII_L"/>
    <property type="match status" value="2"/>
</dbReference>
<dbReference type="Pfam" id="PF13742">
    <property type="entry name" value="tRNA_anti_2"/>
    <property type="match status" value="1"/>
</dbReference>
<keyword id="KW-0963">Cytoplasm</keyword>
<keyword id="KW-0269">Exonuclease</keyword>
<keyword id="KW-0378">Hydrolase</keyword>
<keyword id="KW-0540">Nuclease</keyword>
<proteinExistence type="inferred from homology"/>